<proteinExistence type="inferred from homology"/>
<protein>
    <recommendedName>
        <fullName>UPF0758 protein VV1_0825</fullName>
    </recommendedName>
</protein>
<sequence length="224" mass="25340">MSLKNLPSESMPREKLLQRGPQSLSDAELLAIFLRTGTQGMNVIELADFLLRDFGSLRKLFSADEQSFCRHKGLGQAKYVQLQAVLEMTQRYLAETLQRGDALTSPQHTKLYLSSMLRDRHREAFYVLFLDNQNRVIKDEVMFEGTIDAASVYPREVVKRALHYNAAALILAHNHPSGVAEPSQADRRITRRLSDALGLVDIRVLDHFVVGDGEVVSFAERGWI</sequence>
<reference key="1">
    <citation type="submission" date="2002-12" db="EMBL/GenBank/DDBJ databases">
        <title>Complete genome sequence of Vibrio vulnificus CMCP6.</title>
        <authorList>
            <person name="Rhee J.H."/>
            <person name="Kim S.Y."/>
            <person name="Chung S.S."/>
            <person name="Kim J.J."/>
            <person name="Moon Y.H."/>
            <person name="Jeong H."/>
            <person name="Choy H.E."/>
        </authorList>
    </citation>
    <scope>NUCLEOTIDE SEQUENCE [LARGE SCALE GENOMIC DNA]</scope>
    <source>
        <strain>CMCP6</strain>
    </source>
</reference>
<name>Y825_VIBVU</name>
<comment type="similarity">
    <text evidence="3">Belongs to the UPF0758 family.</text>
</comment>
<organism>
    <name type="scientific">Vibrio vulnificus (strain CMCP6)</name>
    <dbReference type="NCBI Taxonomy" id="216895"/>
    <lineage>
        <taxon>Bacteria</taxon>
        <taxon>Pseudomonadati</taxon>
        <taxon>Pseudomonadota</taxon>
        <taxon>Gammaproteobacteria</taxon>
        <taxon>Vibrionales</taxon>
        <taxon>Vibrionaceae</taxon>
        <taxon>Vibrio</taxon>
    </lineage>
</organism>
<feature type="chain" id="PRO_0000190752" description="UPF0758 protein VV1_0825">
    <location>
        <begin position="1"/>
        <end position="224"/>
    </location>
</feature>
<feature type="domain" description="MPN" evidence="1">
    <location>
        <begin position="102"/>
        <end position="224"/>
    </location>
</feature>
<feature type="region of interest" description="Disordered" evidence="2">
    <location>
        <begin position="1"/>
        <end position="20"/>
    </location>
</feature>
<feature type="short sequence motif" description="JAMM motif" evidence="1">
    <location>
        <begin position="173"/>
        <end position="186"/>
    </location>
</feature>
<feature type="binding site" evidence="1">
    <location>
        <position position="173"/>
    </location>
    <ligand>
        <name>Zn(2+)</name>
        <dbReference type="ChEBI" id="CHEBI:29105"/>
        <note>catalytic</note>
    </ligand>
</feature>
<feature type="binding site" evidence="1">
    <location>
        <position position="175"/>
    </location>
    <ligand>
        <name>Zn(2+)</name>
        <dbReference type="ChEBI" id="CHEBI:29105"/>
        <note>catalytic</note>
    </ligand>
</feature>
<feature type="binding site" evidence="1">
    <location>
        <position position="186"/>
    </location>
    <ligand>
        <name>Zn(2+)</name>
        <dbReference type="ChEBI" id="CHEBI:29105"/>
        <note>catalytic</note>
    </ligand>
</feature>
<gene>
    <name type="ordered locus">VV1_0825</name>
</gene>
<dbReference type="EMBL" id="AE016795">
    <property type="protein sequence ID" value="AAO09329.2"/>
    <property type="molecule type" value="Genomic_DNA"/>
</dbReference>
<dbReference type="SMR" id="Q8DDY0"/>
<dbReference type="KEGG" id="vvu:VV1_0825"/>
<dbReference type="HOGENOM" id="CLU_073529_0_1_6"/>
<dbReference type="Proteomes" id="UP000002275">
    <property type="component" value="Chromosome 1"/>
</dbReference>
<dbReference type="GO" id="GO:0046872">
    <property type="term" value="F:metal ion binding"/>
    <property type="evidence" value="ECO:0007669"/>
    <property type="project" value="UniProtKB-KW"/>
</dbReference>
<dbReference type="GO" id="GO:0008237">
    <property type="term" value="F:metallopeptidase activity"/>
    <property type="evidence" value="ECO:0007669"/>
    <property type="project" value="UniProtKB-KW"/>
</dbReference>
<dbReference type="GO" id="GO:0006508">
    <property type="term" value="P:proteolysis"/>
    <property type="evidence" value="ECO:0007669"/>
    <property type="project" value="UniProtKB-KW"/>
</dbReference>
<dbReference type="CDD" id="cd08071">
    <property type="entry name" value="MPN_DUF2466"/>
    <property type="match status" value="1"/>
</dbReference>
<dbReference type="FunFam" id="3.40.140.10:FF:000032">
    <property type="entry name" value="DNA repair protein RadC"/>
    <property type="match status" value="1"/>
</dbReference>
<dbReference type="Gene3D" id="3.40.140.10">
    <property type="entry name" value="Cytidine Deaminase, domain 2"/>
    <property type="match status" value="1"/>
</dbReference>
<dbReference type="InterPro" id="IPR037518">
    <property type="entry name" value="MPN"/>
</dbReference>
<dbReference type="InterPro" id="IPR025657">
    <property type="entry name" value="RadC_JAB"/>
</dbReference>
<dbReference type="InterPro" id="IPR010994">
    <property type="entry name" value="RuvA_2-like"/>
</dbReference>
<dbReference type="InterPro" id="IPR001405">
    <property type="entry name" value="UPF0758"/>
</dbReference>
<dbReference type="InterPro" id="IPR020891">
    <property type="entry name" value="UPF0758_CS"/>
</dbReference>
<dbReference type="InterPro" id="IPR046778">
    <property type="entry name" value="UPF0758_N"/>
</dbReference>
<dbReference type="NCBIfam" id="NF000642">
    <property type="entry name" value="PRK00024.1"/>
    <property type="match status" value="1"/>
</dbReference>
<dbReference type="NCBIfam" id="TIGR00608">
    <property type="entry name" value="radc"/>
    <property type="match status" value="1"/>
</dbReference>
<dbReference type="PANTHER" id="PTHR30471">
    <property type="entry name" value="DNA REPAIR PROTEIN RADC"/>
    <property type="match status" value="1"/>
</dbReference>
<dbReference type="PANTHER" id="PTHR30471:SF3">
    <property type="entry name" value="UPF0758 PROTEIN YEES-RELATED"/>
    <property type="match status" value="1"/>
</dbReference>
<dbReference type="Pfam" id="PF04002">
    <property type="entry name" value="RadC"/>
    <property type="match status" value="1"/>
</dbReference>
<dbReference type="Pfam" id="PF20582">
    <property type="entry name" value="UPF0758_N"/>
    <property type="match status" value="1"/>
</dbReference>
<dbReference type="SUPFAM" id="SSF102712">
    <property type="entry name" value="JAB1/MPN domain"/>
    <property type="match status" value="1"/>
</dbReference>
<dbReference type="SUPFAM" id="SSF47781">
    <property type="entry name" value="RuvA domain 2-like"/>
    <property type="match status" value="1"/>
</dbReference>
<dbReference type="PROSITE" id="PS50249">
    <property type="entry name" value="MPN"/>
    <property type="match status" value="1"/>
</dbReference>
<dbReference type="PROSITE" id="PS01302">
    <property type="entry name" value="UPF0758"/>
    <property type="match status" value="1"/>
</dbReference>
<evidence type="ECO:0000255" key="1">
    <source>
        <dbReference type="PROSITE-ProRule" id="PRU01182"/>
    </source>
</evidence>
<evidence type="ECO:0000256" key="2">
    <source>
        <dbReference type="SAM" id="MobiDB-lite"/>
    </source>
</evidence>
<evidence type="ECO:0000305" key="3"/>
<accession>Q8DDY0</accession>
<keyword id="KW-0378">Hydrolase</keyword>
<keyword id="KW-0479">Metal-binding</keyword>
<keyword id="KW-0482">Metalloprotease</keyword>
<keyword id="KW-0645">Protease</keyword>
<keyword id="KW-0862">Zinc</keyword>